<keyword id="KW-0027">Amidation</keyword>
<keyword id="KW-0878">Amphibian defense peptide</keyword>
<keyword id="KW-0903">Direct protein sequencing</keyword>
<keyword id="KW-0382">Hypotensive agent</keyword>
<keyword id="KW-0873">Pyrrolidone carboxylic acid</keyword>
<keyword id="KW-0964">Secreted</keyword>
<keyword id="KW-0765">Sulfation</keyword>
<organism>
    <name type="scientific">Ranoidea citropa</name>
    <name type="common">Australian Blue Mountains tree frog</name>
    <name type="synonym">Litoria citropa</name>
    <dbReference type="NCBI Taxonomy" id="94770"/>
    <lineage>
        <taxon>Eukaryota</taxon>
        <taxon>Metazoa</taxon>
        <taxon>Chordata</taxon>
        <taxon>Craniata</taxon>
        <taxon>Vertebrata</taxon>
        <taxon>Euteleostomi</taxon>
        <taxon>Amphibia</taxon>
        <taxon>Batrachia</taxon>
        <taxon>Anura</taxon>
        <taxon>Neobatrachia</taxon>
        <taxon>Hyloidea</taxon>
        <taxon>Hylidae</taxon>
        <taxon>Pelodryadinae</taxon>
        <taxon>Ranoidea</taxon>
    </lineage>
</organism>
<name>CAE31_RANCI</name>
<proteinExistence type="evidence at protein level"/>
<dbReference type="GO" id="GO:0005576">
    <property type="term" value="C:extracellular region"/>
    <property type="evidence" value="ECO:0007669"/>
    <property type="project" value="UniProtKB-SubCell"/>
</dbReference>
<dbReference type="GO" id="GO:0006952">
    <property type="term" value="P:defense response"/>
    <property type="evidence" value="ECO:0007669"/>
    <property type="project" value="UniProtKB-KW"/>
</dbReference>
<dbReference type="GO" id="GO:0008217">
    <property type="term" value="P:regulation of blood pressure"/>
    <property type="evidence" value="ECO:0007669"/>
    <property type="project" value="UniProtKB-KW"/>
</dbReference>
<comment type="function">
    <text evidence="2">Hypotensive neuropeptide.</text>
</comment>
<comment type="subcellular location">
    <subcellularLocation>
        <location>Secreted</location>
    </subcellularLocation>
</comment>
<comment type="tissue specificity">
    <text>Expressed by the skin dorsal glands.</text>
</comment>
<comment type="PTM">
    <text evidence="1">Isoform 3.1Y4 differs from isoform 3.1 in not being sulfated.</text>
</comment>
<comment type="mass spectrometry" mass="1407.0" method="Electrospray" evidence="1"/>
<comment type="similarity">
    <text evidence="2">Belongs to the gastrin/cholecystokinin family.</text>
</comment>
<protein>
    <recommendedName>
        <fullName>Caerulein-3.1/3.1Y4</fullName>
    </recommendedName>
</protein>
<sequence length="11" mass="1347">QQDYGTGWMDF</sequence>
<evidence type="ECO:0000269" key="1">
    <source>
    </source>
</evidence>
<evidence type="ECO:0000305" key="2"/>
<reference key="1">
    <citation type="journal article" date="1999" name="Rapid Commun. Mass Spectrom.">
        <title>Caerulein-like peptides from the skin glands of the Australian blue mountains tree frog Litoria citropa. Part 1. Sequence determination using electrospray mass spectrometry.</title>
        <authorList>
            <person name="Wabnitz P.A."/>
            <person name="Bowie J.H."/>
            <person name="Tyler M.J."/>
        </authorList>
    </citation>
    <scope>PROTEIN SEQUENCE</scope>
    <scope>PYROGLUTAMATE FORMATION AT GLN-1</scope>
    <scope>SULFATION AT TYR-4</scope>
    <scope>AMIDATION AT PHE-11</scope>
    <scope>MASS SPECTROMETRY</scope>
    <source>
        <tissue>Skin secretion</tissue>
    </source>
</reference>
<feature type="peptide" id="PRO_0000043882" description="Caerulein-3.1/3.1Y4">
    <location>
        <begin position="1"/>
        <end position="11"/>
    </location>
</feature>
<feature type="modified residue" description="Pyrrolidone carboxylic acid" evidence="1">
    <location>
        <position position="1"/>
    </location>
</feature>
<feature type="modified residue" description="Sulfotyrosine" evidence="1">
    <location>
        <position position="4"/>
    </location>
</feature>
<feature type="modified residue" description="Phenylalanine amide" evidence="1">
    <location>
        <position position="11"/>
    </location>
</feature>
<accession>P82089</accession>